<accession>P0A179</accession>
<accession>P25753</accession>
<protein>
    <recommendedName>
        <fullName evidence="1">Putative membrane protein insertion efficiency factor</fullName>
    </recommendedName>
</protein>
<name>YIDD_PSEPK</name>
<comment type="function">
    <text evidence="1">Could be involved in insertion of integral membrane proteins into the membrane.</text>
</comment>
<comment type="subcellular location">
    <subcellularLocation>
        <location evidence="1">Cell inner membrane</location>
        <topology evidence="1">Peripheral membrane protein</topology>
        <orientation evidence="1">Cytoplasmic side</orientation>
    </subcellularLocation>
</comment>
<comment type="similarity">
    <text evidence="1">Belongs to the UPF0161 family.</text>
</comment>
<gene>
    <name type="ordered locus">PP_0007</name>
</gene>
<keyword id="KW-0997">Cell inner membrane</keyword>
<keyword id="KW-1003">Cell membrane</keyword>
<keyword id="KW-0472">Membrane</keyword>
<keyword id="KW-1185">Reference proteome</keyword>
<reference key="1">
    <citation type="journal article" date="2002" name="Environ. Microbiol.">
        <title>Complete genome sequence and comparative analysis of the metabolically versatile Pseudomonas putida KT2440.</title>
        <authorList>
            <person name="Nelson K.E."/>
            <person name="Weinel C."/>
            <person name="Paulsen I.T."/>
            <person name="Dodson R.J."/>
            <person name="Hilbert H."/>
            <person name="Martins dos Santos V.A.P."/>
            <person name="Fouts D.E."/>
            <person name="Gill S.R."/>
            <person name="Pop M."/>
            <person name="Holmes M."/>
            <person name="Brinkac L.M."/>
            <person name="Beanan M.J."/>
            <person name="DeBoy R.T."/>
            <person name="Daugherty S.C."/>
            <person name="Kolonay J.F."/>
            <person name="Madupu R."/>
            <person name="Nelson W.C."/>
            <person name="White O."/>
            <person name="Peterson J.D."/>
            <person name="Khouri H.M."/>
            <person name="Hance I."/>
            <person name="Chris Lee P."/>
            <person name="Holtzapple E.K."/>
            <person name="Scanlan D."/>
            <person name="Tran K."/>
            <person name="Moazzez A."/>
            <person name="Utterback T.R."/>
            <person name="Rizzo M."/>
            <person name="Lee K."/>
            <person name="Kosack D."/>
            <person name="Moestl D."/>
            <person name="Wedler H."/>
            <person name="Lauber J."/>
            <person name="Stjepandic D."/>
            <person name="Hoheisel J."/>
            <person name="Straetz M."/>
            <person name="Heim S."/>
            <person name="Kiewitz C."/>
            <person name="Eisen J.A."/>
            <person name="Timmis K.N."/>
            <person name="Duesterhoeft A."/>
            <person name="Tuemmler B."/>
            <person name="Fraser C.M."/>
        </authorList>
    </citation>
    <scope>NUCLEOTIDE SEQUENCE [LARGE SCALE GENOMIC DNA]</scope>
    <source>
        <strain>ATCC 47054 / DSM 6125 / CFBP 8728 / NCIMB 11950 / KT2440</strain>
    </source>
</reference>
<dbReference type="EMBL" id="AE015451">
    <property type="protein sequence ID" value="AAN65641.1"/>
    <property type="molecule type" value="Genomic_DNA"/>
</dbReference>
<dbReference type="RefSeq" id="NP_742177.1">
    <property type="nucleotide sequence ID" value="NC_002947.4"/>
</dbReference>
<dbReference type="STRING" id="160488.PP_0007"/>
<dbReference type="PaxDb" id="160488-PP_0007"/>
<dbReference type="KEGG" id="ppu:PP_0007"/>
<dbReference type="PATRIC" id="fig|160488.4.peg.7"/>
<dbReference type="eggNOG" id="COG0759">
    <property type="taxonomic scope" value="Bacteria"/>
</dbReference>
<dbReference type="HOGENOM" id="CLU_144811_6_1_6"/>
<dbReference type="OrthoDB" id="9801753at2"/>
<dbReference type="PhylomeDB" id="P0A179"/>
<dbReference type="BioCyc" id="PPUT160488:G1G01-7-MONOMER"/>
<dbReference type="Proteomes" id="UP000000556">
    <property type="component" value="Chromosome"/>
</dbReference>
<dbReference type="GO" id="GO:0005886">
    <property type="term" value="C:plasma membrane"/>
    <property type="evidence" value="ECO:0007669"/>
    <property type="project" value="UniProtKB-SubCell"/>
</dbReference>
<dbReference type="HAMAP" id="MF_00386">
    <property type="entry name" value="UPF0161_YidD"/>
    <property type="match status" value="1"/>
</dbReference>
<dbReference type="InterPro" id="IPR002696">
    <property type="entry name" value="Membr_insert_effic_factor_YidD"/>
</dbReference>
<dbReference type="NCBIfam" id="TIGR00278">
    <property type="entry name" value="membrane protein insertion efficiency factor YidD"/>
    <property type="match status" value="1"/>
</dbReference>
<dbReference type="PANTHER" id="PTHR33383">
    <property type="entry name" value="MEMBRANE PROTEIN INSERTION EFFICIENCY FACTOR-RELATED"/>
    <property type="match status" value="1"/>
</dbReference>
<dbReference type="PANTHER" id="PTHR33383:SF1">
    <property type="entry name" value="MEMBRANE PROTEIN INSERTION EFFICIENCY FACTOR-RELATED"/>
    <property type="match status" value="1"/>
</dbReference>
<dbReference type="Pfam" id="PF01809">
    <property type="entry name" value="YidD"/>
    <property type="match status" value="1"/>
</dbReference>
<dbReference type="SMART" id="SM01234">
    <property type="entry name" value="Haemolytic"/>
    <property type="match status" value="1"/>
</dbReference>
<organism>
    <name type="scientific">Pseudomonas putida (strain ATCC 47054 / DSM 6125 / CFBP 8728 / NCIMB 11950 / KT2440)</name>
    <dbReference type="NCBI Taxonomy" id="160488"/>
    <lineage>
        <taxon>Bacteria</taxon>
        <taxon>Pseudomonadati</taxon>
        <taxon>Pseudomonadota</taxon>
        <taxon>Gammaproteobacteria</taxon>
        <taxon>Pseudomonadales</taxon>
        <taxon>Pseudomonadaceae</taxon>
        <taxon>Pseudomonas</taxon>
    </lineage>
</organism>
<proteinExistence type="inferred from homology"/>
<sequence>MRKLALVPIQFYRYAISPLMANHCRFFPSCSCYAYEAIENHGIWRGGWLAVRRLGRCHPWNDGGYDPVPPAPSSRTSSIAE</sequence>
<feature type="chain" id="PRO_0000171855" description="Putative membrane protein insertion efficiency factor">
    <location>
        <begin position="1"/>
        <end position="81"/>
    </location>
</feature>
<feature type="region of interest" description="Disordered" evidence="2">
    <location>
        <begin position="61"/>
        <end position="81"/>
    </location>
</feature>
<evidence type="ECO:0000255" key="1">
    <source>
        <dbReference type="HAMAP-Rule" id="MF_00386"/>
    </source>
</evidence>
<evidence type="ECO:0000256" key="2">
    <source>
        <dbReference type="SAM" id="MobiDB-lite"/>
    </source>
</evidence>